<gene>
    <name type="primary">ihfA</name>
    <name type="synonym">himA</name>
    <name type="ordered locus">c2109</name>
</gene>
<evidence type="ECO:0000250" key="1"/>
<evidence type="ECO:0000256" key="2">
    <source>
        <dbReference type="SAM" id="MobiDB-lite"/>
    </source>
</evidence>
<evidence type="ECO:0000305" key="3"/>
<accession>P0A6X8</accession>
<accession>P06984</accession>
<organism>
    <name type="scientific">Escherichia coli O6:H1 (strain CFT073 / ATCC 700928 / UPEC)</name>
    <dbReference type="NCBI Taxonomy" id="199310"/>
    <lineage>
        <taxon>Bacteria</taxon>
        <taxon>Pseudomonadati</taxon>
        <taxon>Pseudomonadota</taxon>
        <taxon>Gammaproteobacteria</taxon>
        <taxon>Enterobacterales</taxon>
        <taxon>Enterobacteriaceae</taxon>
        <taxon>Escherichia</taxon>
    </lineage>
</organism>
<comment type="function">
    <text evidence="1">This protein is one of the two subunits of integration host factor, a specific DNA-binding protein that functions in genetic recombination as well as in transcriptional and translational control.</text>
</comment>
<comment type="subunit">
    <text evidence="1">Heterodimer of an alpha and a beta chain.</text>
</comment>
<comment type="similarity">
    <text evidence="3">Belongs to the bacterial histone-like protein family.</text>
</comment>
<dbReference type="EMBL" id="AE014075">
    <property type="protein sequence ID" value="AAN80569.1"/>
    <property type="molecule type" value="Genomic_DNA"/>
</dbReference>
<dbReference type="RefSeq" id="WP_001229265.1">
    <property type="nucleotide sequence ID" value="NZ_CP051263.1"/>
</dbReference>
<dbReference type="SMR" id="P0A6X8"/>
<dbReference type="STRING" id="199310.c2109"/>
<dbReference type="GeneID" id="93775925"/>
<dbReference type="KEGG" id="ecc:c2109"/>
<dbReference type="eggNOG" id="COG0776">
    <property type="taxonomic scope" value="Bacteria"/>
</dbReference>
<dbReference type="HOGENOM" id="CLU_105066_1_3_6"/>
<dbReference type="BioCyc" id="ECOL199310:C2109-MONOMER"/>
<dbReference type="Proteomes" id="UP000001410">
    <property type="component" value="Chromosome"/>
</dbReference>
<dbReference type="GO" id="GO:0005829">
    <property type="term" value="C:cytosol"/>
    <property type="evidence" value="ECO:0007669"/>
    <property type="project" value="TreeGrafter"/>
</dbReference>
<dbReference type="GO" id="GO:0003677">
    <property type="term" value="F:DNA binding"/>
    <property type="evidence" value="ECO:0007669"/>
    <property type="project" value="UniProtKB-UniRule"/>
</dbReference>
<dbReference type="GO" id="GO:0030527">
    <property type="term" value="F:structural constituent of chromatin"/>
    <property type="evidence" value="ECO:0007669"/>
    <property type="project" value="InterPro"/>
</dbReference>
<dbReference type="GO" id="GO:0006310">
    <property type="term" value="P:DNA recombination"/>
    <property type="evidence" value="ECO:0007669"/>
    <property type="project" value="UniProtKB-UniRule"/>
</dbReference>
<dbReference type="GO" id="GO:0009893">
    <property type="term" value="P:positive regulation of metabolic process"/>
    <property type="evidence" value="ECO:0007669"/>
    <property type="project" value="UniProtKB-ARBA"/>
</dbReference>
<dbReference type="GO" id="GO:0006355">
    <property type="term" value="P:regulation of DNA-templated transcription"/>
    <property type="evidence" value="ECO:0007669"/>
    <property type="project" value="UniProtKB-UniRule"/>
</dbReference>
<dbReference type="GO" id="GO:0006417">
    <property type="term" value="P:regulation of translation"/>
    <property type="evidence" value="ECO:0007669"/>
    <property type="project" value="UniProtKB-UniRule"/>
</dbReference>
<dbReference type="CDD" id="cd13835">
    <property type="entry name" value="IHF_A"/>
    <property type="match status" value="1"/>
</dbReference>
<dbReference type="FunFam" id="4.10.520.10:FF:000002">
    <property type="entry name" value="Integration host factor subunit alpha"/>
    <property type="match status" value="1"/>
</dbReference>
<dbReference type="Gene3D" id="4.10.520.10">
    <property type="entry name" value="IHF-like DNA-binding proteins"/>
    <property type="match status" value="1"/>
</dbReference>
<dbReference type="HAMAP" id="MF_00380">
    <property type="entry name" value="IHF_alpha"/>
    <property type="match status" value="1"/>
</dbReference>
<dbReference type="InterPro" id="IPR000119">
    <property type="entry name" value="Hist_DNA-bd"/>
</dbReference>
<dbReference type="InterPro" id="IPR020816">
    <property type="entry name" value="Histone-like_DNA-bd_CS"/>
</dbReference>
<dbReference type="InterPro" id="IPR010992">
    <property type="entry name" value="IHF-like_DNA-bd_dom_sf"/>
</dbReference>
<dbReference type="InterPro" id="IPR005684">
    <property type="entry name" value="IHF_alpha"/>
</dbReference>
<dbReference type="NCBIfam" id="TIGR00987">
    <property type="entry name" value="himA"/>
    <property type="match status" value="1"/>
</dbReference>
<dbReference type="NCBIfam" id="NF001401">
    <property type="entry name" value="PRK00285.1"/>
    <property type="match status" value="1"/>
</dbReference>
<dbReference type="PANTHER" id="PTHR33175">
    <property type="entry name" value="DNA-BINDING PROTEIN HU"/>
    <property type="match status" value="1"/>
</dbReference>
<dbReference type="PANTHER" id="PTHR33175:SF2">
    <property type="entry name" value="INTEGRATION HOST FACTOR SUBUNIT ALPHA"/>
    <property type="match status" value="1"/>
</dbReference>
<dbReference type="Pfam" id="PF00216">
    <property type="entry name" value="Bac_DNA_binding"/>
    <property type="match status" value="1"/>
</dbReference>
<dbReference type="PRINTS" id="PR01727">
    <property type="entry name" value="DNABINDINGHU"/>
</dbReference>
<dbReference type="SMART" id="SM00411">
    <property type="entry name" value="BHL"/>
    <property type="match status" value="1"/>
</dbReference>
<dbReference type="SUPFAM" id="SSF47729">
    <property type="entry name" value="IHF-like DNA-binding proteins"/>
    <property type="match status" value="1"/>
</dbReference>
<dbReference type="PROSITE" id="PS00045">
    <property type="entry name" value="HISTONE_LIKE"/>
    <property type="match status" value="1"/>
</dbReference>
<feature type="chain" id="PRO_0000105006" description="Integration host factor subunit alpha">
    <location>
        <begin position="1"/>
        <end position="99"/>
    </location>
</feature>
<feature type="region of interest" description="Disordered" evidence="2">
    <location>
        <begin position="49"/>
        <end position="73"/>
    </location>
</feature>
<reference key="1">
    <citation type="journal article" date="2002" name="Proc. Natl. Acad. Sci. U.S.A.">
        <title>Extensive mosaic structure revealed by the complete genome sequence of uropathogenic Escherichia coli.</title>
        <authorList>
            <person name="Welch R.A."/>
            <person name="Burland V."/>
            <person name="Plunkett G. III"/>
            <person name="Redford P."/>
            <person name="Roesch P."/>
            <person name="Rasko D."/>
            <person name="Buckles E.L."/>
            <person name="Liou S.-R."/>
            <person name="Boutin A."/>
            <person name="Hackett J."/>
            <person name="Stroud D."/>
            <person name="Mayhew G.F."/>
            <person name="Rose D.J."/>
            <person name="Zhou S."/>
            <person name="Schwartz D.C."/>
            <person name="Perna N.T."/>
            <person name="Mobley H.L.T."/>
            <person name="Donnenberg M.S."/>
            <person name="Blattner F.R."/>
        </authorList>
    </citation>
    <scope>NUCLEOTIDE SEQUENCE [LARGE SCALE GENOMIC DNA]</scope>
    <source>
        <strain>CFT073 / ATCC 700928 / UPEC</strain>
    </source>
</reference>
<proteinExistence type="inferred from homology"/>
<sequence>MALTKAEMSEYLFDKLGLSKRDAKELVELFFEEIRRALENGEQVKLSGFGNFDLRDKNQRPGRNPKTGEDIPITARRVVTFRPGQKLKSRVENASPKDE</sequence>
<keyword id="KW-0233">DNA recombination</keyword>
<keyword id="KW-0238">DNA-binding</keyword>
<keyword id="KW-1185">Reference proteome</keyword>
<keyword id="KW-0804">Transcription</keyword>
<keyword id="KW-0805">Transcription regulation</keyword>
<keyword id="KW-0810">Translation regulation</keyword>
<protein>
    <recommendedName>
        <fullName>Integration host factor subunit alpha</fullName>
        <shortName>IHF-alpha</shortName>
    </recommendedName>
</protein>
<name>IHFA_ECOL6</name>